<dbReference type="EC" id="1.1.1.44"/>
<dbReference type="EMBL" id="AE017143">
    <property type="protein sequence ID" value="AAP95728.1"/>
    <property type="molecule type" value="Genomic_DNA"/>
</dbReference>
<dbReference type="RefSeq" id="WP_010944778.1">
    <property type="nucleotide sequence ID" value="NC_002940.2"/>
</dbReference>
<dbReference type="SMR" id="Q7VMX4"/>
<dbReference type="STRING" id="233412.HD_0833"/>
<dbReference type="KEGG" id="hdu:HD_0833"/>
<dbReference type="eggNOG" id="COG0362">
    <property type="taxonomic scope" value="Bacteria"/>
</dbReference>
<dbReference type="HOGENOM" id="CLU_024540_4_2_6"/>
<dbReference type="OrthoDB" id="9804542at2"/>
<dbReference type="UniPathway" id="UPA00115">
    <property type="reaction ID" value="UER00410"/>
</dbReference>
<dbReference type="Proteomes" id="UP000001022">
    <property type="component" value="Chromosome"/>
</dbReference>
<dbReference type="GO" id="GO:0050661">
    <property type="term" value="F:NADP binding"/>
    <property type="evidence" value="ECO:0007669"/>
    <property type="project" value="InterPro"/>
</dbReference>
<dbReference type="GO" id="GO:0004616">
    <property type="term" value="F:phosphogluconate dehydrogenase (decarboxylating) activity"/>
    <property type="evidence" value="ECO:0007669"/>
    <property type="project" value="UniProtKB-EC"/>
</dbReference>
<dbReference type="GO" id="GO:0019521">
    <property type="term" value="P:D-gluconate metabolic process"/>
    <property type="evidence" value="ECO:0007669"/>
    <property type="project" value="UniProtKB-KW"/>
</dbReference>
<dbReference type="GO" id="GO:0016054">
    <property type="term" value="P:organic acid catabolic process"/>
    <property type="evidence" value="ECO:0007669"/>
    <property type="project" value="UniProtKB-ARBA"/>
</dbReference>
<dbReference type="GO" id="GO:0006098">
    <property type="term" value="P:pentose-phosphate shunt"/>
    <property type="evidence" value="ECO:0007669"/>
    <property type="project" value="UniProtKB-UniPathway"/>
</dbReference>
<dbReference type="FunFam" id="1.10.1040.10:FF:000002">
    <property type="entry name" value="6-phosphogluconate dehydrogenase, decarboxylating"/>
    <property type="match status" value="1"/>
</dbReference>
<dbReference type="FunFam" id="1.20.5.320:FF:000002">
    <property type="entry name" value="6-phosphogluconate dehydrogenase, decarboxylating"/>
    <property type="match status" value="1"/>
</dbReference>
<dbReference type="FunFam" id="3.40.50.720:FF:000007">
    <property type="entry name" value="6-phosphogluconate dehydrogenase, decarboxylating"/>
    <property type="match status" value="1"/>
</dbReference>
<dbReference type="Gene3D" id="1.20.5.320">
    <property type="entry name" value="6-Phosphogluconate Dehydrogenase, domain 3"/>
    <property type="match status" value="1"/>
</dbReference>
<dbReference type="Gene3D" id="1.10.1040.10">
    <property type="entry name" value="N-(1-d-carboxylethyl)-l-norvaline Dehydrogenase, domain 2"/>
    <property type="match status" value="1"/>
</dbReference>
<dbReference type="Gene3D" id="3.40.50.720">
    <property type="entry name" value="NAD(P)-binding Rossmann-like Domain"/>
    <property type="match status" value="1"/>
</dbReference>
<dbReference type="InterPro" id="IPR008927">
    <property type="entry name" value="6-PGluconate_DH-like_C_sf"/>
</dbReference>
<dbReference type="InterPro" id="IPR013328">
    <property type="entry name" value="6PGD_dom2"/>
</dbReference>
<dbReference type="InterPro" id="IPR006114">
    <property type="entry name" value="6PGDH_C"/>
</dbReference>
<dbReference type="InterPro" id="IPR006113">
    <property type="entry name" value="6PGDH_Gnd/GntZ"/>
</dbReference>
<dbReference type="InterPro" id="IPR006115">
    <property type="entry name" value="6PGDH_NADP-bd"/>
</dbReference>
<dbReference type="InterPro" id="IPR006184">
    <property type="entry name" value="6PGdom_BS"/>
</dbReference>
<dbReference type="InterPro" id="IPR036291">
    <property type="entry name" value="NAD(P)-bd_dom_sf"/>
</dbReference>
<dbReference type="InterPro" id="IPR006183">
    <property type="entry name" value="Pgluconate_DH"/>
</dbReference>
<dbReference type="NCBIfam" id="TIGR00873">
    <property type="entry name" value="gnd"/>
    <property type="match status" value="1"/>
</dbReference>
<dbReference type="NCBIfam" id="NF006765">
    <property type="entry name" value="PRK09287.1"/>
    <property type="match status" value="1"/>
</dbReference>
<dbReference type="PANTHER" id="PTHR11811">
    <property type="entry name" value="6-PHOSPHOGLUCONATE DEHYDROGENASE"/>
    <property type="match status" value="1"/>
</dbReference>
<dbReference type="Pfam" id="PF00393">
    <property type="entry name" value="6PGD"/>
    <property type="match status" value="1"/>
</dbReference>
<dbReference type="Pfam" id="PF03446">
    <property type="entry name" value="NAD_binding_2"/>
    <property type="match status" value="1"/>
</dbReference>
<dbReference type="PIRSF" id="PIRSF000109">
    <property type="entry name" value="6PGD"/>
    <property type="match status" value="1"/>
</dbReference>
<dbReference type="PRINTS" id="PR00076">
    <property type="entry name" value="6PGDHDRGNASE"/>
</dbReference>
<dbReference type="SMART" id="SM01350">
    <property type="entry name" value="6PGD"/>
    <property type="match status" value="1"/>
</dbReference>
<dbReference type="SUPFAM" id="SSF48179">
    <property type="entry name" value="6-phosphogluconate dehydrogenase C-terminal domain-like"/>
    <property type="match status" value="1"/>
</dbReference>
<dbReference type="SUPFAM" id="SSF51735">
    <property type="entry name" value="NAD(P)-binding Rossmann-fold domains"/>
    <property type="match status" value="1"/>
</dbReference>
<dbReference type="PROSITE" id="PS00461">
    <property type="entry name" value="6PGD"/>
    <property type="match status" value="1"/>
</dbReference>
<proteinExistence type="inferred from homology"/>
<organism>
    <name type="scientific">Haemophilus ducreyi (strain 35000HP / ATCC 700724)</name>
    <dbReference type="NCBI Taxonomy" id="233412"/>
    <lineage>
        <taxon>Bacteria</taxon>
        <taxon>Pseudomonadati</taxon>
        <taxon>Pseudomonadota</taxon>
        <taxon>Gammaproteobacteria</taxon>
        <taxon>Pasteurellales</taxon>
        <taxon>Pasteurellaceae</taxon>
        <taxon>Haemophilus</taxon>
    </lineage>
</organism>
<sequence length="484" mass="53272">MSIKGDIGVIGLAVMGQNLILNMNDNGFKVVAYNRTASKVDEFLAGEAKDTNIIGAYSLEDLAAKLEKPRKIMLMVRAGEVVDQFIDALLPHLEAGDIIIDGGNSNYPDTNRRTITLAEKGIRFIGTGVSGGEEGARHGPSIMPGGNEEAWPFVKPILQAISAKTDKDEPCCDWVGKEGAGHFVKMVHNGIEYGDMQLICEAYQFLKDGLGLNYEEMHAIFADWKNTELDSYLIDITADILAYKDADGEPLVEKILDTAGQKGTGKWTGINALDFGIPLTLITEAVFARCVSAFKDQRVAVSQLFNKTITPISDDKKEWIEAVRKALLASKIISYAQGFMLIREASENFEWNINYGATALLWREGCIIRSAFLGNIRDAYEANPGLVFLGSDPYFQNILQSAMADWRKVVAKSIEIGIPMPCMAAAITFLDGYSSEHLPANLLQAQRDYFGAHTYERTDKPRCSFFHTNWTGRGGNTASTTYDV</sequence>
<feature type="chain" id="PRO_0000090040" description="6-phosphogluconate dehydrogenase, decarboxylating">
    <location>
        <begin position="1"/>
        <end position="484"/>
    </location>
</feature>
<feature type="active site" description="Proton acceptor" evidence="1">
    <location>
        <position position="185"/>
    </location>
</feature>
<feature type="active site" description="Proton donor" evidence="1">
    <location>
        <position position="192"/>
    </location>
</feature>
<feature type="binding site" evidence="1">
    <location>
        <begin position="11"/>
        <end position="16"/>
    </location>
    <ligand>
        <name>NADP(+)</name>
        <dbReference type="ChEBI" id="CHEBI:58349"/>
    </ligand>
</feature>
<feature type="binding site" evidence="1">
    <location>
        <begin position="34"/>
        <end position="36"/>
    </location>
    <ligand>
        <name>NADP(+)</name>
        <dbReference type="ChEBI" id="CHEBI:58349"/>
    </ligand>
</feature>
<feature type="binding site" evidence="1">
    <location>
        <begin position="76"/>
        <end position="78"/>
    </location>
    <ligand>
        <name>NADP(+)</name>
        <dbReference type="ChEBI" id="CHEBI:58349"/>
    </ligand>
</feature>
<feature type="binding site" evidence="1">
    <location>
        <position position="104"/>
    </location>
    <ligand>
        <name>NADP(+)</name>
        <dbReference type="ChEBI" id="CHEBI:58349"/>
    </ligand>
</feature>
<feature type="binding site" description="in other chain" evidence="1">
    <location>
        <position position="104"/>
    </location>
    <ligand>
        <name>substrate</name>
        <note>ligand shared between dimeric partners</note>
    </ligand>
</feature>
<feature type="binding site" description="in other chain" evidence="1">
    <location>
        <begin position="130"/>
        <end position="132"/>
    </location>
    <ligand>
        <name>substrate</name>
        <note>ligand shared between dimeric partners</note>
    </ligand>
</feature>
<feature type="binding site" description="in other chain" evidence="1">
    <location>
        <begin position="188"/>
        <end position="189"/>
    </location>
    <ligand>
        <name>substrate</name>
        <note>ligand shared between dimeric partners</note>
    </ligand>
</feature>
<feature type="binding site" description="in other chain" evidence="1">
    <location>
        <position position="193"/>
    </location>
    <ligand>
        <name>substrate</name>
        <note>ligand shared between dimeric partners</note>
    </ligand>
</feature>
<feature type="binding site" description="in other chain" evidence="1">
    <location>
        <position position="262"/>
    </location>
    <ligand>
        <name>substrate</name>
        <note>ligand shared between dimeric partners</note>
    </ligand>
</feature>
<feature type="binding site" description="in other chain" evidence="1">
    <location>
        <position position="289"/>
    </location>
    <ligand>
        <name>substrate</name>
        <note>ligand shared between dimeric partners</note>
    </ligand>
</feature>
<feature type="binding site" evidence="1">
    <location>
        <position position="447"/>
    </location>
    <ligand>
        <name>substrate</name>
        <note>ligand shared between dimeric partners</note>
    </ligand>
</feature>
<feature type="binding site" evidence="1">
    <location>
        <position position="453"/>
    </location>
    <ligand>
        <name>substrate</name>
        <note>ligand shared between dimeric partners</note>
    </ligand>
</feature>
<comment type="function">
    <text evidence="1">Catalyzes the oxidative decarboxylation of 6-phosphogluconate to ribulose 5-phosphate and CO(2), with concomitant reduction of NADP to NADPH.</text>
</comment>
<comment type="catalytic activity">
    <reaction>
        <text>6-phospho-D-gluconate + NADP(+) = D-ribulose 5-phosphate + CO2 + NADPH</text>
        <dbReference type="Rhea" id="RHEA:10116"/>
        <dbReference type="ChEBI" id="CHEBI:16526"/>
        <dbReference type="ChEBI" id="CHEBI:57783"/>
        <dbReference type="ChEBI" id="CHEBI:58121"/>
        <dbReference type="ChEBI" id="CHEBI:58349"/>
        <dbReference type="ChEBI" id="CHEBI:58759"/>
        <dbReference type="EC" id="1.1.1.44"/>
    </reaction>
</comment>
<comment type="pathway">
    <text>Carbohydrate degradation; pentose phosphate pathway; D-ribulose 5-phosphate from D-glucose 6-phosphate (oxidative stage): step 3/3.</text>
</comment>
<comment type="subunit">
    <text evidence="1">Homodimer.</text>
</comment>
<comment type="similarity">
    <text evidence="2">Belongs to the 6-phosphogluconate dehydrogenase family.</text>
</comment>
<keyword id="KW-0311">Gluconate utilization</keyword>
<keyword id="KW-0521">NADP</keyword>
<keyword id="KW-0560">Oxidoreductase</keyword>
<keyword id="KW-0570">Pentose shunt</keyword>
<keyword id="KW-1185">Reference proteome</keyword>
<gene>
    <name type="primary">gnd</name>
    <name type="ordered locus">HD_0833</name>
</gene>
<evidence type="ECO:0000250" key="1"/>
<evidence type="ECO:0000305" key="2"/>
<protein>
    <recommendedName>
        <fullName>6-phosphogluconate dehydrogenase, decarboxylating</fullName>
        <ecNumber>1.1.1.44</ecNumber>
    </recommendedName>
</protein>
<name>6PGD_HAEDU</name>
<accession>Q7VMX4</accession>
<reference key="1">
    <citation type="submission" date="2003-06" db="EMBL/GenBank/DDBJ databases">
        <title>The complete genome sequence of Haemophilus ducreyi.</title>
        <authorList>
            <person name="Munson R.S. Jr."/>
            <person name="Ray W.C."/>
            <person name="Mahairas G."/>
            <person name="Sabo P."/>
            <person name="Mungur R."/>
            <person name="Johnson L."/>
            <person name="Nguyen D."/>
            <person name="Wang J."/>
            <person name="Forst C."/>
            <person name="Hood L."/>
        </authorList>
    </citation>
    <scope>NUCLEOTIDE SEQUENCE [LARGE SCALE GENOMIC DNA]</scope>
    <source>
        <strain>35000HP / ATCC 700724</strain>
    </source>
</reference>